<evidence type="ECO:0000255" key="1">
    <source>
        <dbReference type="HAMAP-Rule" id="MF_00131"/>
    </source>
</evidence>
<sequence length="263" mass="28212">MERQKISEKFSELREKKEGALICYVMAGDPSAEKTGEIVKALVNGGADIIELGFPFSDPVADGPTIQVAGQRSLAAGMDTQRYFELIKNLDVGIPLVCMTYYNPVFRYGVEKFVEKAADAGISGLIVPDIPVEEAADLKNSCEKHGLDLIFLIAPTTTEGRVQKILERGSGFLYLVSRLGVTGAREDVSSSTRELLSRVETGLPKAVGFGISTGEQAAEVRDAGADAVIVGSAFVKIIDEGKDVNERLEALAKELKSGIKRAS</sequence>
<proteinExistence type="inferred from homology"/>
<feature type="chain" id="PRO_1000018227" description="Tryptophan synthase alpha chain">
    <location>
        <begin position="1"/>
        <end position="263"/>
    </location>
</feature>
<feature type="active site" description="Proton acceptor" evidence="1">
    <location>
        <position position="51"/>
    </location>
</feature>
<feature type="active site" description="Proton acceptor" evidence="1">
    <location>
        <position position="62"/>
    </location>
</feature>
<name>TRPA_METBF</name>
<organism>
    <name type="scientific">Methanosarcina barkeri (strain Fusaro / DSM 804)</name>
    <dbReference type="NCBI Taxonomy" id="269797"/>
    <lineage>
        <taxon>Archaea</taxon>
        <taxon>Methanobacteriati</taxon>
        <taxon>Methanobacteriota</taxon>
        <taxon>Stenosarchaea group</taxon>
        <taxon>Methanomicrobia</taxon>
        <taxon>Methanosarcinales</taxon>
        <taxon>Methanosarcinaceae</taxon>
        <taxon>Methanosarcina</taxon>
    </lineage>
</organism>
<keyword id="KW-0028">Amino-acid biosynthesis</keyword>
<keyword id="KW-0057">Aromatic amino acid biosynthesis</keyword>
<keyword id="KW-0456">Lyase</keyword>
<keyword id="KW-0822">Tryptophan biosynthesis</keyword>
<gene>
    <name evidence="1" type="primary">trpA</name>
    <name type="ordered locus">Mbar_A3623</name>
</gene>
<protein>
    <recommendedName>
        <fullName evidence="1">Tryptophan synthase alpha chain</fullName>
        <ecNumber evidence="1">4.2.1.20</ecNumber>
    </recommendedName>
</protein>
<accession>Q465F4</accession>
<comment type="function">
    <text>The alpha subunit is responsible for the aldol cleavage of indoleglycerol phosphate to indole and glyceraldehyde 3-phosphate.</text>
</comment>
<comment type="catalytic activity">
    <reaction evidence="1">
        <text>(1S,2R)-1-C-(indol-3-yl)glycerol 3-phosphate + L-serine = D-glyceraldehyde 3-phosphate + L-tryptophan + H2O</text>
        <dbReference type="Rhea" id="RHEA:10532"/>
        <dbReference type="ChEBI" id="CHEBI:15377"/>
        <dbReference type="ChEBI" id="CHEBI:33384"/>
        <dbReference type="ChEBI" id="CHEBI:57912"/>
        <dbReference type="ChEBI" id="CHEBI:58866"/>
        <dbReference type="ChEBI" id="CHEBI:59776"/>
        <dbReference type="EC" id="4.2.1.20"/>
    </reaction>
</comment>
<comment type="pathway">
    <text evidence="1">Amino-acid biosynthesis; L-tryptophan biosynthesis; L-tryptophan from chorismate: step 5/5.</text>
</comment>
<comment type="subunit">
    <text evidence="1">Tetramer of two alpha and two beta chains.</text>
</comment>
<comment type="similarity">
    <text evidence="1">Belongs to the TrpA family.</text>
</comment>
<reference key="1">
    <citation type="journal article" date="2006" name="J. Bacteriol.">
        <title>The Methanosarcina barkeri genome: comparative analysis with Methanosarcina acetivorans and Methanosarcina mazei reveals extensive rearrangement within methanosarcinal genomes.</title>
        <authorList>
            <person name="Maeder D.L."/>
            <person name="Anderson I."/>
            <person name="Brettin T.S."/>
            <person name="Bruce D.C."/>
            <person name="Gilna P."/>
            <person name="Han C.S."/>
            <person name="Lapidus A."/>
            <person name="Metcalf W.W."/>
            <person name="Saunders E."/>
            <person name="Tapia R."/>
            <person name="Sowers K.R."/>
        </authorList>
    </citation>
    <scope>NUCLEOTIDE SEQUENCE [LARGE SCALE GENOMIC DNA]</scope>
    <source>
        <strain>Fusaro / DSM 804</strain>
    </source>
</reference>
<dbReference type="EC" id="4.2.1.20" evidence="1"/>
<dbReference type="EMBL" id="CP000099">
    <property type="protein sequence ID" value="AAZ72488.1"/>
    <property type="molecule type" value="Genomic_DNA"/>
</dbReference>
<dbReference type="SMR" id="Q465F4"/>
<dbReference type="STRING" id="269797.Mbar_A3623"/>
<dbReference type="PaxDb" id="269797-Mbar_A3623"/>
<dbReference type="KEGG" id="mba:Mbar_A3623"/>
<dbReference type="eggNOG" id="arCOG01086">
    <property type="taxonomic scope" value="Archaea"/>
</dbReference>
<dbReference type="HOGENOM" id="CLU_016734_0_0_2"/>
<dbReference type="OrthoDB" id="25658at2157"/>
<dbReference type="UniPathway" id="UPA00035">
    <property type="reaction ID" value="UER00044"/>
</dbReference>
<dbReference type="GO" id="GO:0005829">
    <property type="term" value="C:cytosol"/>
    <property type="evidence" value="ECO:0007669"/>
    <property type="project" value="TreeGrafter"/>
</dbReference>
<dbReference type="GO" id="GO:0004834">
    <property type="term" value="F:tryptophan synthase activity"/>
    <property type="evidence" value="ECO:0007669"/>
    <property type="project" value="UniProtKB-UniRule"/>
</dbReference>
<dbReference type="CDD" id="cd04724">
    <property type="entry name" value="Tryptophan_synthase_alpha"/>
    <property type="match status" value="1"/>
</dbReference>
<dbReference type="FunFam" id="3.20.20.70:FF:000037">
    <property type="entry name" value="Tryptophan synthase alpha chain"/>
    <property type="match status" value="1"/>
</dbReference>
<dbReference type="Gene3D" id="3.20.20.70">
    <property type="entry name" value="Aldolase class I"/>
    <property type="match status" value="1"/>
</dbReference>
<dbReference type="HAMAP" id="MF_00131">
    <property type="entry name" value="Trp_synth_alpha"/>
    <property type="match status" value="1"/>
</dbReference>
<dbReference type="InterPro" id="IPR013785">
    <property type="entry name" value="Aldolase_TIM"/>
</dbReference>
<dbReference type="InterPro" id="IPR011060">
    <property type="entry name" value="RibuloseP-bd_barrel"/>
</dbReference>
<dbReference type="InterPro" id="IPR018204">
    <property type="entry name" value="Trp_synthase_alpha_AS"/>
</dbReference>
<dbReference type="InterPro" id="IPR002028">
    <property type="entry name" value="Trp_synthase_suA"/>
</dbReference>
<dbReference type="NCBIfam" id="TIGR00262">
    <property type="entry name" value="trpA"/>
    <property type="match status" value="1"/>
</dbReference>
<dbReference type="PANTHER" id="PTHR43406:SF1">
    <property type="entry name" value="TRYPTOPHAN SYNTHASE ALPHA CHAIN, CHLOROPLASTIC"/>
    <property type="match status" value="1"/>
</dbReference>
<dbReference type="PANTHER" id="PTHR43406">
    <property type="entry name" value="TRYPTOPHAN SYNTHASE, ALPHA CHAIN"/>
    <property type="match status" value="1"/>
</dbReference>
<dbReference type="Pfam" id="PF00290">
    <property type="entry name" value="Trp_syntA"/>
    <property type="match status" value="1"/>
</dbReference>
<dbReference type="SUPFAM" id="SSF51366">
    <property type="entry name" value="Ribulose-phoshate binding barrel"/>
    <property type="match status" value="1"/>
</dbReference>
<dbReference type="PROSITE" id="PS00167">
    <property type="entry name" value="TRP_SYNTHASE_ALPHA"/>
    <property type="match status" value="1"/>
</dbReference>